<geneLocation type="plasmid">
    <name>IncN pCU1</name>
</geneLocation>
<sequence length="245" mass="26288">MEIRPPCRAPVPCGNPPTLPGAGAVWKSAHLAGRRCCVEIRPPCRAPVPCGNPPTLPGAGAVWESAHLAGRRCRVGIRPPCRAPVLCGNPPTLPGAGAVWESAHLAGRRCRVGIRPPCRAPVLCGNPPTVAGRRCRVGIRPPCRASVPCGNPPTLPGAGAVWKFAHLHDKNLSNDRLMCADLCQTGFCLSIIENRNFPESSILYLASKGVFSFICLRAGSRKDRFNSAKFFCWDSGKRKRSFNQA</sequence>
<feature type="chain" id="PRO_0000068533" description="Uncharacterized 26.4 kDa protein">
    <location>
        <begin position="1"/>
        <end position="245"/>
    </location>
</feature>
<feature type="sequence conflict" description="In Ref. 2." evidence="1" ref="2">
    <original>AS</original>
    <variation>GK</variation>
    <location>
        <begin position="206"/>
        <end position="207"/>
    </location>
</feature>
<dbReference type="EMBL" id="M18262">
    <property type="protein sequence ID" value="AAA98072.1"/>
    <property type="molecule type" value="Genomic_DNA"/>
</dbReference>
<dbReference type="EMBL" id="M18262">
    <property type="protein sequence ID" value="AAA98071.1"/>
    <property type="status" value="ALT_INIT"/>
    <property type="molecule type" value="Genomic_DNA"/>
</dbReference>
<dbReference type="PIR" id="JQ0047">
    <property type="entry name" value="QQECU2"/>
</dbReference>
<dbReference type="PIR" id="S12089">
    <property type="entry name" value="S12089"/>
</dbReference>
<proteinExistence type="predicted"/>
<evidence type="ECO:0000305" key="1"/>
<protein>
    <recommendedName>
        <fullName>Uncharacterized 26.4 kDa protein</fullName>
    </recommendedName>
    <alternativeName>
        <fullName>ORF 245</fullName>
    </alternativeName>
</protein>
<accession>P18128</accession>
<comment type="sequence caution" evidence="1">
    <conflict type="erroneous initiation">
        <sequence resource="EMBL-CDS" id="AAA98071"/>
    </conflict>
</comment>
<name>YPC2_ECOLX</name>
<reference key="1">
    <citation type="journal article" date="1990" name="Gene">
        <title>Mutations within the replicon of the IncN plasmid pCU1 that affect its Escherichia coli polA-independence but not its autonomous replication ability.</title>
        <authorList>
            <person name="Krishnan B.R."/>
            <person name="Fobert P.R."/>
            <person name="Seitzer U."/>
            <person name="Iyer V.N."/>
        </authorList>
    </citation>
    <scope>NUCLEOTIDE SEQUENCE [GENOMIC DNA]</scope>
</reference>
<reference key="2">
    <citation type="journal article" date="1987" name="Gene">
        <title>Isolation and structure of the replicon of the promiscuous plasmid pCU1.</title>
        <authorList>
            <person name="Kozlowski M."/>
            <person name="Thatte V."/>
            <person name="Lau P.C.K."/>
            <person name="Visentin L.P."/>
            <person name="Iyer V.N."/>
        </authorList>
    </citation>
    <scope>NUCLEOTIDE SEQUENCE [GENOMIC DNA] OF 1-207</scope>
</reference>
<keyword id="KW-0614">Plasmid</keyword>
<organism>
    <name type="scientific">Escherichia coli</name>
    <dbReference type="NCBI Taxonomy" id="562"/>
    <lineage>
        <taxon>Bacteria</taxon>
        <taxon>Pseudomonadati</taxon>
        <taxon>Pseudomonadota</taxon>
        <taxon>Gammaproteobacteria</taxon>
        <taxon>Enterobacterales</taxon>
        <taxon>Enterobacteriaceae</taxon>
        <taxon>Escherichia</taxon>
    </lineage>
</organism>